<accession>Q9XYD3</accession>
<accession>Q19389</accession>
<gene>
    <name evidence="7" type="primary">hbl-1</name>
    <name evidence="7" type="synonym">lin-57</name>
    <name evidence="7" type="ORF">F13D11.2</name>
</gene>
<dbReference type="EMBL" id="AF097737">
    <property type="protein sequence ID" value="AAD16170.1"/>
    <property type="molecule type" value="mRNA"/>
</dbReference>
<dbReference type="EMBL" id="BX284606">
    <property type="protein sequence ID" value="CCD69456.1"/>
    <property type="molecule type" value="Genomic_DNA"/>
</dbReference>
<dbReference type="PIR" id="T16057">
    <property type="entry name" value="T16057"/>
</dbReference>
<dbReference type="PIR" id="T43676">
    <property type="entry name" value="T43676"/>
</dbReference>
<dbReference type="RefSeq" id="NP_001041243.1">
    <property type="nucleotide sequence ID" value="NM_001047778.5"/>
</dbReference>
<dbReference type="BioGRID" id="45781">
    <property type="interactions" value="5"/>
</dbReference>
<dbReference type="FunCoup" id="Q9XYD3">
    <property type="interactions" value="162"/>
</dbReference>
<dbReference type="STRING" id="6239.F13D11.2a.1"/>
<dbReference type="PaxDb" id="6239-F13D11.2a"/>
<dbReference type="EnsemblMetazoa" id="F13D11.2a.1">
    <property type="protein sequence ID" value="F13D11.2a.1"/>
    <property type="gene ID" value="WBGene00001824"/>
</dbReference>
<dbReference type="GeneID" id="180848"/>
<dbReference type="KEGG" id="cel:CELE_F13D11.2"/>
<dbReference type="UCSC" id="F13D11.2a">
    <property type="organism name" value="c. elegans"/>
</dbReference>
<dbReference type="AGR" id="WB:WBGene00001824"/>
<dbReference type="CTD" id="180848"/>
<dbReference type="WormBase" id="F13D11.2a">
    <property type="protein sequence ID" value="CE27956"/>
    <property type="gene ID" value="WBGene00001824"/>
    <property type="gene designation" value="hbl-1"/>
</dbReference>
<dbReference type="eggNOG" id="KOG1721">
    <property type="taxonomic scope" value="Eukaryota"/>
</dbReference>
<dbReference type="GeneTree" id="ENSGT00940000171732"/>
<dbReference type="InParanoid" id="Q9XYD3"/>
<dbReference type="OMA" id="EYHYRNH"/>
<dbReference type="OrthoDB" id="10015593at2759"/>
<dbReference type="PhylomeDB" id="Q9XYD3"/>
<dbReference type="PRO" id="PR:Q9XYD3"/>
<dbReference type="Proteomes" id="UP000001940">
    <property type="component" value="Chromosome X"/>
</dbReference>
<dbReference type="Bgee" id="WBGene00001824">
    <property type="expression patterns" value="Expressed in pharyngeal muscle cell (C elegans) and 3 other cell types or tissues"/>
</dbReference>
<dbReference type="ExpressionAtlas" id="Q9XYD3">
    <property type="expression patterns" value="baseline and differential"/>
</dbReference>
<dbReference type="GO" id="GO:0005634">
    <property type="term" value="C:nucleus"/>
    <property type="evidence" value="ECO:0000314"/>
    <property type="project" value="WormBase"/>
</dbReference>
<dbReference type="GO" id="GO:0000981">
    <property type="term" value="F:DNA-binding transcription factor activity, RNA polymerase II-specific"/>
    <property type="evidence" value="ECO:0000250"/>
    <property type="project" value="WormBase"/>
</dbReference>
<dbReference type="GO" id="GO:0000977">
    <property type="term" value="F:RNA polymerase II transcription regulatory region sequence-specific DNA binding"/>
    <property type="evidence" value="ECO:0000315"/>
    <property type="project" value="WormBase"/>
</dbReference>
<dbReference type="GO" id="GO:0008270">
    <property type="term" value="F:zinc ion binding"/>
    <property type="evidence" value="ECO:0007669"/>
    <property type="project" value="UniProtKB-KW"/>
</dbReference>
<dbReference type="GO" id="GO:0018991">
    <property type="term" value="P:egg-laying behavior"/>
    <property type="evidence" value="ECO:0000315"/>
    <property type="project" value="WormBase"/>
</dbReference>
<dbReference type="GO" id="GO:0009792">
    <property type="term" value="P:embryo development ending in birth or egg hatching"/>
    <property type="evidence" value="ECO:0000315"/>
    <property type="project" value="WormBase"/>
</dbReference>
<dbReference type="GO" id="GO:0000122">
    <property type="term" value="P:negative regulation of transcription by RNA polymerase II"/>
    <property type="evidence" value="ECO:0000315"/>
    <property type="project" value="UniProtKB"/>
</dbReference>
<dbReference type="GO" id="GO:0002119">
    <property type="term" value="P:nematode larval development"/>
    <property type="evidence" value="ECO:0000315"/>
    <property type="project" value="WormBase"/>
</dbReference>
<dbReference type="GO" id="GO:0019538">
    <property type="term" value="P:protein metabolic process"/>
    <property type="evidence" value="ECO:0000315"/>
    <property type="project" value="WormBase"/>
</dbReference>
<dbReference type="GO" id="GO:0040034">
    <property type="term" value="P:regulation of development, heterochronic"/>
    <property type="evidence" value="ECO:0000315"/>
    <property type="project" value="WormBase"/>
</dbReference>
<dbReference type="GO" id="GO:0006357">
    <property type="term" value="P:regulation of transcription by RNA polymerase II"/>
    <property type="evidence" value="ECO:0000318"/>
    <property type="project" value="GO_Central"/>
</dbReference>
<dbReference type="FunFam" id="3.30.160.60:FF:001301">
    <property type="entry name" value="Blast:Protein hunchback"/>
    <property type="match status" value="1"/>
</dbReference>
<dbReference type="FunFam" id="3.30.160.60:FF:002883">
    <property type="entry name" value="Hunchback-like protein"/>
    <property type="match status" value="1"/>
</dbReference>
<dbReference type="FunFam" id="3.30.160.60:FF:002920">
    <property type="entry name" value="Hunchback-like protein"/>
    <property type="match status" value="1"/>
</dbReference>
<dbReference type="Gene3D" id="3.30.160.60">
    <property type="entry name" value="Classic Zinc Finger"/>
    <property type="match status" value="4"/>
</dbReference>
<dbReference type="InterPro" id="IPR036236">
    <property type="entry name" value="Znf_C2H2_sf"/>
</dbReference>
<dbReference type="InterPro" id="IPR013087">
    <property type="entry name" value="Znf_C2H2_type"/>
</dbReference>
<dbReference type="PANTHER" id="PTHR24392:SF31">
    <property type="entry name" value="C2H2-TYPE DOMAIN-CONTAINING PROTEIN"/>
    <property type="match status" value="1"/>
</dbReference>
<dbReference type="PANTHER" id="PTHR24392">
    <property type="entry name" value="ZINC FINGER PROTEIN"/>
    <property type="match status" value="1"/>
</dbReference>
<dbReference type="Pfam" id="PF00096">
    <property type="entry name" value="zf-C2H2"/>
    <property type="match status" value="1"/>
</dbReference>
<dbReference type="SMART" id="SM00355">
    <property type="entry name" value="ZnF_C2H2"/>
    <property type="match status" value="9"/>
</dbReference>
<dbReference type="SUPFAM" id="SSF57667">
    <property type="entry name" value="beta-beta-alpha zinc fingers"/>
    <property type="match status" value="4"/>
</dbReference>
<dbReference type="PROSITE" id="PS00028">
    <property type="entry name" value="ZINC_FINGER_C2H2_1"/>
    <property type="match status" value="3"/>
</dbReference>
<dbReference type="PROSITE" id="PS50157">
    <property type="entry name" value="ZINC_FINGER_C2H2_2"/>
    <property type="match status" value="4"/>
</dbReference>
<reference key="1">
    <citation type="journal article" date="1999" name="Dev. Biol.">
        <title>A Caenorhabditis elegans homologue of hunchback is required for late stages of development but not early embryonic patterning.</title>
        <authorList>
            <person name="Fay D.S."/>
            <person name="Stanley H.M."/>
            <person name="Han M."/>
            <person name="Wood W.B."/>
        </authorList>
    </citation>
    <scope>NUCLEOTIDE SEQUENCE [MRNA]</scope>
    <scope>FUNCTION</scope>
    <source>
        <strain>Bristol N2</strain>
    </source>
</reference>
<reference key="2">
    <citation type="journal article" date="1998" name="Science">
        <title>Genome sequence of the nematode C. elegans: a platform for investigating biology.</title>
        <authorList>
            <consortium name="The C. elegans sequencing consortium"/>
        </authorList>
    </citation>
    <scope>NUCLEOTIDE SEQUENCE [LARGE SCALE GENOMIC DNA]</scope>
    <source>
        <strain>Bristol N2</strain>
    </source>
</reference>
<reference key="3">
    <citation type="journal article" date="2011" name="Development">
        <title>The zinc-finger protein SEA-2 regulates larval developmental timing and adult lifespan in C. elegans.</title>
        <authorList>
            <person name="Huang X."/>
            <person name="Zhang H."/>
            <person name="Zhang H."/>
        </authorList>
    </citation>
    <scope>FUNCTION</scope>
    <scope>DISRUPTION PHENOTYPE</scope>
</reference>
<reference key="4">
    <citation type="journal article" date="2017" name="Cell Cycle">
        <title>acn-1, a C. elegans homologue of ACE, genetically interacts with the let-7 microRNA and other heterochronic genes.</title>
        <authorList>
            <person name="Metheetrairut C."/>
            <person name="Ahuja Y."/>
            <person name="Slack F.J."/>
        </authorList>
    </citation>
    <scope>FUNCTION</scope>
    <scope>MUTAGENESIS OF LEU-83</scope>
</reference>
<feature type="chain" id="PRO_0000046984" description="Hunchback-like protein">
    <location>
        <begin position="1"/>
        <end position="982"/>
    </location>
</feature>
<feature type="zinc finger region" description="C2H2-type 1" evidence="1">
    <location>
        <begin position="336"/>
        <end position="358"/>
    </location>
</feature>
<feature type="zinc finger region" description="C2H2-type 2" evidence="1">
    <location>
        <begin position="361"/>
        <end position="384"/>
    </location>
</feature>
<feature type="zinc finger region" description="C2H2-type 3" evidence="1">
    <location>
        <begin position="538"/>
        <end position="560"/>
    </location>
</feature>
<feature type="zinc finger region" description="C2H2-type 4" evidence="1">
    <location>
        <begin position="567"/>
        <end position="589"/>
    </location>
</feature>
<feature type="zinc finger region" description="C2H2-type 5" evidence="1">
    <location>
        <begin position="595"/>
        <end position="617"/>
    </location>
</feature>
<feature type="zinc finger region" description="C2H2-type 6" evidence="1">
    <location>
        <begin position="623"/>
        <end position="647"/>
    </location>
</feature>
<feature type="zinc finger region" description="C2H2-type 7" evidence="1">
    <location>
        <begin position="734"/>
        <end position="756"/>
    </location>
</feature>
<feature type="zinc finger region" description="C2H2-type 8" evidence="1">
    <location>
        <begin position="929"/>
        <end position="951"/>
    </location>
</feature>
<feature type="zinc finger region" description="C2H2-type 9" evidence="1">
    <location>
        <begin position="957"/>
        <end position="981"/>
    </location>
</feature>
<feature type="region of interest" description="Disordered" evidence="2">
    <location>
        <begin position="87"/>
        <end position="194"/>
    </location>
</feature>
<feature type="region of interest" description="Disordered" evidence="2">
    <location>
        <begin position="377"/>
        <end position="415"/>
    </location>
</feature>
<feature type="region of interest" description="Disordered" evidence="2">
    <location>
        <begin position="811"/>
        <end position="896"/>
    </location>
</feature>
<feature type="compositionally biased region" description="Basic and acidic residues" evidence="2">
    <location>
        <begin position="101"/>
        <end position="110"/>
    </location>
</feature>
<feature type="compositionally biased region" description="Polar residues" evidence="2">
    <location>
        <begin position="111"/>
        <end position="132"/>
    </location>
</feature>
<feature type="compositionally biased region" description="Acidic residues" evidence="2">
    <location>
        <begin position="142"/>
        <end position="152"/>
    </location>
</feature>
<feature type="compositionally biased region" description="Basic and acidic residues" evidence="2">
    <location>
        <begin position="153"/>
        <end position="175"/>
    </location>
</feature>
<feature type="compositionally biased region" description="Polar residues" evidence="2">
    <location>
        <begin position="176"/>
        <end position="193"/>
    </location>
</feature>
<feature type="compositionally biased region" description="Polar residues" evidence="2">
    <location>
        <begin position="816"/>
        <end position="831"/>
    </location>
</feature>
<feature type="compositionally biased region" description="Polar residues" evidence="2">
    <location>
        <begin position="843"/>
        <end position="862"/>
    </location>
</feature>
<feature type="compositionally biased region" description="Basic and acidic residues" evidence="2">
    <location>
        <begin position="863"/>
        <end position="875"/>
    </location>
</feature>
<feature type="mutagenesis site" description="In mg285; causes precocious hypodermal seam cell fusion and adult alae production in larval stages L3 and L4." evidence="4">
    <original>L</original>
    <variation>M</variation>
    <location>
        <position position="83"/>
    </location>
</feature>
<proteinExistence type="evidence at protein level"/>
<sequence length="982" mass="106952">MVQSDSPEELAQRAKPAWRLQQMPVQLSNFVSKTPLIGSEWPPTGDWRSANNNSLGDWNKCCVPGSEIPQHLGPFGNSSLTMLTAQQPGEKIHPDGGYVSPKEDGRKSSEHTNSYDVSASQSPSNDGAQSDSTSDEHIDVECMTETEMDTDEKDSTIKPEDQATPKLEEGSDSKPESTSVEGTSSNYQVTSEPVQMPQMPIPVIPSFLKNSLPAPIPITPTQSANVERSNSPSIEEALLLTLSQQQFAEVFAEAAKIRKSSSESIGFQRSGTSAFLNIEPKEMSMSSANNNNEEAPASTVSACSTPTTTTSASFCRPPGLGPVALPPTQNGQTPMLVCPICGFMCPSKFHFNSHMNTHGDHQCSMCDYTSRTEGRLKKHMRESHTVEEQLRAGFESEPAKESASSPKNLSLSKDGSATSPINEIFNLSTTMASILDSTNNAVSSTSTTEQPSALSALTLDMSSTPSLLSTLAHSSFGVSALDQIKAISENPSFMPEGGINLASALGVVSNAIKGDTPSPEKQSNGECRRSSSGKIKIFKCKQCGHQSLSKDDQWAHARTHIPAEKQLNCQHCNFVTEYKHHLEYHYRNHIGSKPFQCKKCAYNCVNKSMLNSHMKSHTNHYQFRCMDCTYATKYCHSLKLHLKKYNHRRVPEGIEMSGGDSSPPFTSDATITFSPLMKQEIKTETVEPVTSIAQPFPFNPMMGNHGLNFANHMLLNKHLDVGLMGLRNSVMSPLKCSACDFVASSADEKMRHSMSHILNSSNVPTSIASLYNSLNLPSFSHVAPDNDNALESMDCDVKIDDDNITESHCYEEMDQGSDSAVSPTGSSQISSGDEETKKCKSLSLEQISARANGNNSPMSNDSAMEKDGESADDAPHSPSDTTSVPSPPLHSSSIVAPIPITPQPNEFLQSILAQASLLGPLLANRPSAFYCDHCKIPFDTQQVLDSHMRFHTPGNPFMCSDCQYQAFNELSFALHMYQARHQ</sequence>
<organism>
    <name type="scientific">Caenorhabditis elegans</name>
    <dbReference type="NCBI Taxonomy" id="6239"/>
    <lineage>
        <taxon>Eukaryota</taxon>
        <taxon>Metazoa</taxon>
        <taxon>Ecdysozoa</taxon>
        <taxon>Nematoda</taxon>
        <taxon>Chromadorea</taxon>
        <taxon>Rhabditida</taxon>
        <taxon>Rhabditina</taxon>
        <taxon>Rhabditomorpha</taxon>
        <taxon>Rhabditoidea</taxon>
        <taxon>Rhabditidae</taxon>
        <taxon>Peloderinae</taxon>
        <taxon>Caenorhabditis</taxon>
    </lineage>
</organism>
<name>HBL1_CAEEL</name>
<comment type="function">
    <text evidence="3 4 5">Required for the late stages of development (PubMed:9917360). Plays a role in the developmental timing of postembryonic hypodermal seam cell fusion events and adult alae production (PubMed:21471153, PubMed:28933985).</text>
</comment>
<comment type="subcellular location">
    <subcellularLocation>
        <location evidence="6">Nucleus</location>
    </subcellularLocation>
</comment>
<comment type="tissue specificity">
    <text>Expressed primarily in ectodermal cells during embryonic and larval development.</text>
</comment>
<comment type="disruption phenotype">
    <text evidence="3">RNAi-mediated knockdown results in premature alae formation at the L3 larval stage (PubMed:21471153). This phenotype is partially suppressed in a sea-2 bp283 mutant background (PubMed:21471153).</text>
</comment>
<comment type="similarity">
    <text evidence="6">Belongs to the hunchback C2H2-type zinc-finger protein family.</text>
</comment>
<keyword id="KW-0217">Developmental protein</keyword>
<keyword id="KW-0238">DNA-binding</keyword>
<keyword id="KW-0479">Metal-binding</keyword>
<keyword id="KW-0539">Nucleus</keyword>
<keyword id="KW-1185">Reference proteome</keyword>
<keyword id="KW-0677">Repeat</keyword>
<keyword id="KW-0862">Zinc</keyword>
<keyword id="KW-0863">Zinc-finger</keyword>
<evidence type="ECO:0000255" key="1">
    <source>
        <dbReference type="PROSITE-ProRule" id="PRU00042"/>
    </source>
</evidence>
<evidence type="ECO:0000256" key="2">
    <source>
        <dbReference type="SAM" id="MobiDB-lite"/>
    </source>
</evidence>
<evidence type="ECO:0000269" key="3">
    <source>
    </source>
</evidence>
<evidence type="ECO:0000269" key="4">
    <source>
    </source>
</evidence>
<evidence type="ECO:0000269" key="5">
    <source>
    </source>
</evidence>
<evidence type="ECO:0000305" key="6"/>
<evidence type="ECO:0000312" key="7">
    <source>
        <dbReference type="WormBase" id="F13D11.2a"/>
    </source>
</evidence>
<protein>
    <recommendedName>
        <fullName>Hunchback-like protein</fullName>
    </recommendedName>
</protein>